<reference key="1">
    <citation type="journal article" date="2002" name="Nucleic Acids Res.">
        <title>Genome sequence of Oceanobacillus iheyensis isolated from the Iheya Ridge and its unexpected adaptive capabilities to extreme environments.</title>
        <authorList>
            <person name="Takami H."/>
            <person name="Takaki Y."/>
            <person name="Uchiyama I."/>
        </authorList>
    </citation>
    <scope>NUCLEOTIDE SEQUENCE [LARGE SCALE GENOMIC DNA]</scope>
    <source>
        <strain>DSM 14371 / CIP 107618 / JCM 11309 / KCTC 3954 / HTE831</strain>
    </source>
</reference>
<organism>
    <name type="scientific">Oceanobacillus iheyensis (strain DSM 14371 / CIP 107618 / JCM 11309 / KCTC 3954 / HTE831)</name>
    <dbReference type="NCBI Taxonomy" id="221109"/>
    <lineage>
        <taxon>Bacteria</taxon>
        <taxon>Bacillati</taxon>
        <taxon>Bacillota</taxon>
        <taxon>Bacilli</taxon>
        <taxon>Bacillales</taxon>
        <taxon>Bacillaceae</taxon>
        <taxon>Oceanobacillus</taxon>
    </lineage>
</organism>
<name>ECTA_OCEIH</name>
<comment type="function">
    <text evidence="1">Catalyzes the acetylation of L-2,4-diaminobutyrate (DABA) to gamma-N-acetyl-alpha,gamma-diaminobutyric acid (ADABA) with acetyl coenzyme A.</text>
</comment>
<comment type="catalytic activity">
    <reaction>
        <text>L-2,4-diaminobutanoate + acetyl-CoA = (2S)-4-acetamido-2-aminobutanoate + CoA + H(+)</text>
        <dbReference type="Rhea" id="RHEA:16901"/>
        <dbReference type="ChEBI" id="CHEBI:15378"/>
        <dbReference type="ChEBI" id="CHEBI:57287"/>
        <dbReference type="ChEBI" id="CHEBI:57288"/>
        <dbReference type="ChEBI" id="CHEBI:58761"/>
        <dbReference type="ChEBI" id="CHEBI:58929"/>
        <dbReference type="EC" id="2.3.1.178"/>
    </reaction>
</comment>
<comment type="pathway">
    <text>Amine and polyamine biosynthesis; ectoine biosynthesis; L-ectoine from L-aspartate 4-semialdehyde: step 2/3.</text>
</comment>
<comment type="similarity">
    <text evidence="3">Belongs to the acetyltransferase family. EctA subfamily.</text>
</comment>
<comment type="sequence caution" evidence="3">
    <conflict type="erroneous initiation">
        <sequence resource="EMBL-CDS" id="BAC12473"/>
    </conflict>
</comment>
<sequence length="179" mass="20907">MAEKLKVDTDEYYFRRPTKEDGGPVWELVREIGNLDLNSSYSYVLWCEVFAESSIVVEHKETQQIVGFISGFMHPEKEDTLFIWQVAVSSTQRGKGLATKMLLQLLEWNESVNFIEATVAPSNKPSNYLFLGLARKIHTNWKISDYFKTDHFPAKDEEHEEELLFRIGPMRKNKNKRMI</sequence>
<feature type="chain" id="PRO_0000220089" description="L-2,4-diaminobutyric acid acetyltransferase">
    <location>
        <begin position="1"/>
        <end position="179"/>
    </location>
</feature>
<feature type="domain" description="N-acetyltransferase" evidence="2">
    <location>
        <begin position="12"/>
        <end position="153"/>
    </location>
</feature>
<evidence type="ECO:0000250" key="1"/>
<evidence type="ECO:0000255" key="2">
    <source>
        <dbReference type="PROSITE-ProRule" id="PRU00532"/>
    </source>
</evidence>
<evidence type="ECO:0000305" key="3"/>
<keyword id="KW-0012">Acyltransferase</keyword>
<keyword id="KW-1185">Reference proteome</keyword>
<keyword id="KW-0808">Transferase</keyword>
<gene>
    <name type="primary">ectA</name>
    <name type="ordered locus">OB0517</name>
</gene>
<accession>Q8ESU9</accession>
<proteinExistence type="inferred from homology"/>
<dbReference type="EC" id="2.3.1.178"/>
<dbReference type="EMBL" id="BA000028">
    <property type="protein sequence ID" value="BAC12473.1"/>
    <property type="status" value="ALT_INIT"/>
    <property type="molecule type" value="Genomic_DNA"/>
</dbReference>
<dbReference type="SMR" id="Q8ESU9"/>
<dbReference type="STRING" id="221109.gene:10732721"/>
<dbReference type="KEGG" id="oih:OB0517"/>
<dbReference type="eggNOG" id="COG0456">
    <property type="taxonomic scope" value="Bacteria"/>
</dbReference>
<dbReference type="HOGENOM" id="CLU_111896_0_0_9"/>
<dbReference type="PhylomeDB" id="Q8ESU9"/>
<dbReference type="UniPathway" id="UPA00067">
    <property type="reaction ID" value="UER00122"/>
</dbReference>
<dbReference type="Proteomes" id="UP000000822">
    <property type="component" value="Chromosome"/>
</dbReference>
<dbReference type="GO" id="GO:0033816">
    <property type="term" value="F:diaminobutyrate acetyltransferase activity"/>
    <property type="evidence" value="ECO:0007669"/>
    <property type="project" value="UniProtKB-EC"/>
</dbReference>
<dbReference type="GO" id="GO:0019491">
    <property type="term" value="P:ectoine biosynthetic process"/>
    <property type="evidence" value="ECO:0007669"/>
    <property type="project" value="UniProtKB-UniPathway"/>
</dbReference>
<dbReference type="CDD" id="cd04301">
    <property type="entry name" value="NAT_SF"/>
    <property type="match status" value="1"/>
</dbReference>
<dbReference type="Gene3D" id="3.40.630.30">
    <property type="match status" value="1"/>
</dbReference>
<dbReference type="InterPro" id="IPR016181">
    <property type="entry name" value="Acyl_CoA_acyltransferase"/>
</dbReference>
<dbReference type="InterPro" id="IPR012772">
    <property type="entry name" value="Ectoine_EctA"/>
</dbReference>
<dbReference type="InterPro" id="IPR000182">
    <property type="entry name" value="GNAT_dom"/>
</dbReference>
<dbReference type="NCBIfam" id="TIGR02406">
    <property type="entry name" value="ectoine_EctA"/>
    <property type="match status" value="1"/>
</dbReference>
<dbReference type="Pfam" id="PF00583">
    <property type="entry name" value="Acetyltransf_1"/>
    <property type="match status" value="1"/>
</dbReference>
<dbReference type="SUPFAM" id="SSF55729">
    <property type="entry name" value="Acyl-CoA N-acyltransferases (Nat)"/>
    <property type="match status" value="1"/>
</dbReference>
<dbReference type="PROSITE" id="PS51186">
    <property type="entry name" value="GNAT"/>
    <property type="match status" value="1"/>
</dbReference>
<protein>
    <recommendedName>
        <fullName>L-2,4-diaminobutyric acid acetyltransferase</fullName>
        <shortName>DABA acetyltransferase</shortName>
        <ecNumber>2.3.1.178</ecNumber>
    </recommendedName>
</protein>